<feature type="chain" id="PRO_1000141692" description="DNA-directed RNA polymerase subunit beta">
    <location>
        <begin position="1"/>
        <end position="1342"/>
    </location>
</feature>
<feature type="modified residue" description="N6-acetyllysine" evidence="1">
    <location>
        <position position="1022"/>
    </location>
</feature>
<feature type="modified residue" description="N6-acetyllysine" evidence="1">
    <location>
        <position position="1200"/>
    </location>
</feature>
<evidence type="ECO:0000255" key="1">
    <source>
        <dbReference type="HAMAP-Rule" id="MF_01321"/>
    </source>
</evidence>
<name>RPOB_ECOLU</name>
<proteinExistence type="inferred from homology"/>
<protein>
    <recommendedName>
        <fullName evidence="1">DNA-directed RNA polymerase subunit beta</fullName>
        <shortName evidence="1">RNAP subunit beta</shortName>
        <ecNumber evidence="1">2.7.7.6</ecNumber>
    </recommendedName>
    <alternativeName>
        <fullName evidence="1">RNA polymerase subunit beta</fullName>
    </alternativeName>
    <alternativeName>
        <fullName evidence="1">Transcriptase subunit beta</fullName>
    </alternativeName>
</protein>
<keyword id="KW-0007">Acetylation</keyword>
<keyword id="KW-0240">DNA-directed RNA polymerase</keyword>
<keyword id="KW-0548">Nucleotidyltransferase</keyword>
<keyword id="KW-0804">Transcription</keyword>
<keyword id="KW-0808">Transferase</keyword>
<organism>
    <name type="scientific">Escherichia coli O17:K52:H18 (strain UMN026 / ExPEC)</name>
    <dbReference type="NCBI Taxonomy" id="585056"/>
    <lineage>
        <taxon>Bacteria</taxon>
        <taxon>Pseudomonadati</taxon>
        <taxon>Pseudomonadota</taxon>
        <taxon>Gammaproteobacteria</taxon>
        <taxon>Enterobacterales</taxon>
        <taxon>Enterobacteriaceae</taxon>
        <taxon>Escherichia</taxon>
    </lineage>
</organism>
<accession>B7NFS7</accession>
<comment type="function">
    <text evidence="1">DNA-dependent RNA polymerase catalyzes the transcription of DNA into RNA using the four ribonucleoside triphosphates as substrates.</text>
</comment>
<comment type="catalytic activity">
    <reaction evidence="1">
        <text>RNA(n) + a ribonucleoside 5'-triphosphate = RNA(n+1) + diphosphate</text>
        <dbReference type="Rhea" id="RHEA:21248"/>
        <dbReference type="Rhea" id="RHEA-COMP:14527"/>
        <dbReference type="Rhea" id="RHEA-COMP:17342"/>
        <dbReference type="ChEBI" id="CHEBI:33019"/>
        <dbReference type="ChEBI" id="CHEBI:61557"/>
        <dbReference type="ChEBI" id="CHEBI:140395"/>
        <dbReference type="EC" id="2.7.7.6"/>
    </reaction>
</comment>
<comment type="subunit">
    <text evidence="1">The RNAP catalytic core consists of 2 alpha, 1 beta, 1 beta' and 1 omega subunit. When a sigma factor is associated with the core the holoenzyme is formed, which can initiate transcription.</text>
</comment>
<comment type="similarity">
    <text evidence="1">Belongs to the RNA polymerase beta chain family.</text>
</comment>
<sequence>MVYSYTEKKRIRKDFGKRPQVLDVPYLLSIQLDSFQKFIEQDPEGQYGLEAAFRSVFPIQSYSGNSELQYVSYRLGEPVFDVQECQIRGVTYSAPLRVKLRLVIYEREAPEGTVKDIKEQEVYMGEIPLMTDNGTFVINGTERVIVSQLHRSPGVFFDSDKGKTHSSGKVLYNARIIPYRGSWLDFEFDPKDNLFVRIDRRRKLPATIILRALNYTTEQILDLFFEKVIFEIRDNKLQMELVPERLRGETASFDIEANGKVYVEKGRRITARHIRQLEKDDVKLIEVPVEYIAGKVVAKDYIDESTGELICAANMELSLDLLAKLSQSGHKRIETLFTNDLDHGPYISETLRVDPTNDRLSALVEIYRMMRPGEPPTREAAESLFENLFFSEDRYDLSAVGRMKFNRSLLREEIEGSGILSKDDIIDVMKKLIDIRNGKGEVDDIDHLGNRRIRSVGEMAENQFRVGLVRVERAVKERLSLGDLDTLMPQDMINAKPISAAVKEFFGSSQLSQFMDQNNPLSEITHKRRISALGPGGLTRERAGFEVRDVHPTHYGRVCPIETPEGPNIGLINSLSVYAQTNEYGFLETPYRKVTDGVVTDEIHYLSAIEEGNYVIAQANSNLDEEGHFVEDLVTCRSKGESSLFSRDQVDYMDVSTQQVVSVGASLIPFLEHDDANRALMGANMQRQAVPTLRADKPLVGTGMERAVAVDSGVTAVAKRGGVVQYVDASRIVIKVNEDEMYPGEAGIDIYNLTKYTRSNQNTCINQMPCVSLGEPVERGDVLADGPSTDLGELALGQNMRVAFMPWNGYNFEDSILVSERVVQEDRFTTIHIQELACVSRDTKLGPEEITADIPNVGEAALSKLDESGIVYIGAEVTGGDILVGKVTPKGETQLTPEEKLLRAIFGEKASDVKDSSLRVPNGVSGTVIDVQVFTRDGVEKDKRALEIEEMQLKQAKKDLSEELQILEAGLFSRIRAVLVAGGVEAEKLDKLPRDRWLELGLTDEEKQNQLEQLAEQYDELKHEFEKKLEAKRRKITQGDDLAPGVLKIVKVYLAVKRRIQPGDKMAGRHGNKGVISKINPIEDMPYDENGTPVDIVLNPLGVPSRMNIGQILETHLGMAAKGIGDKINAMLKQQQEVAKLREFIQRAYDLGADVRQKVDLSTFSDEEVMRLAENLRKGMPIATPVFDGAKEAEIKELLKLGDLPTSGQIRLYDGRTGEQFERPVTVGYMYMLKLNHLVDDKMHARSTGSYSLVTQQPLGGKAQFGGQRFGEMEVWALEAYGAAYTLQEMLTVKSDDVNGRTKMYKNIVDGNHQMEPGMPESFNVLLKEIRSLGINIELEDE</sequence>
<dbReference type="EC" id="2.7.7.6" evidence="1"/>
<dbReference type="EMBL" id="CU928163">
    <property type="protein sequence ID" value="CAR15634.1"/>
    <property type="molecule type" value="Genomic_DNA"/>
</dbReference>
<dbReference type="RefSeq" id="WP_000263098.1">
    <property type="nucleotide sequence ID" value="NC_011751.1"/>
</dbReference>
<dbReference type="RefSeq" id="YP_002415124.1">
    <property type="nucleotide sequence ID" value="NC_011751.1"/>
</dbReference>
<dbReference type="SMR" id="B7NFS7"/>
<dbReference type="STRING" id="585056.ECUMN_4509"/>
<dbReference type="GeneID" id="93777907"/>
<dbReference type="KEGG" id="eum:ECUMN_4509"/>
<dbReference type="PATRIC" id="fig|585056.7.peg.4680"/>
<dbReference type="HOGENOM" id="CLU_000524_4_3_6"/>
<dbReference type="Proteomes" id="UP000007097">
    <property type="component" value="Chromosome"/>
</dbReference>
<dbReference type="GO" id="GO:0000428">
    <property type="term" value="C:DNA-directed RNA polymerase complex"/>
    <property type="evidence" value="ECO:0007669"/>
    <property type="project" value="UniProtKB-KW"/>
</dbReference>
<dbReference type="GO" id="GO:0003677">
    <property type="term" value="F:DNA binding"/>
    <property type="evidence" value="ECO:0007669"/>
    <property type="project" value="UniProtKB-UniRule"/>
</dbReference>
<dbReference type="GO" id="GO:0003899">
    <property type="term" value="F:DNA-directed RNA polymerase activity"/>
    <property type="evidence" value="ECO:0007669"/>
    <property type="project" value="UniProtKB-UniRule"/>
</dbReference>
<dbReference type="GO" id="GO:0032549">
    <property type="term" value="F:ribonucleoside binding"/>
    <property type="evidence" value="ECO:0007669"/>
    <property type="project" value="InterPro"/>
</dbReference>
<dbReference type="GO" id="GO:0006351">
    <property type="term" value="P:DNA-templated transcription"/>
    <property type="evidence" value="ECO:0007669"/>
    <property type="project" value="UniProtKB-UniRule"/>
</dbReference>
<dbReference type="CDD" id="cd00653">
    <property type="entry name" value="RNA_pol_B_RPB2"/>
    <property type="match status" value="1"/>
</dbReference>
<dbReference type="FunFam" id="2.30.150.10:FF:000001">
    <property type="entry name" value="DNA-directed RNA polymerase subunit beta"/>
    <property type="match status" value="1"/>
</dbReference>
<dbReference type="FunFam" id="2.40.270.10:FF:000003">
    <property type="entry name" value="DNA-directed RNA polymerase subunit beta"/>
    <property type="match status" value="1"/>
</dbReference>
<dbReference type="FunFam" id="2.40.270.10:FF:000004">
    <property type="entry name" value="DNA-directed RNA polymerase subunit beta"/>
    <property type="match status" value="1"/>
</dbReference>
<dbReference type="FunFam" id="2.40.50.100:FF:000006">
    <property type="entry name" value="DNA-directed RNA polymerase subunit beta"/>
    <property type="match status" value="1"/>
</dbReference>
<dbReference type="FunFam" id="2.40.50.150:FF:000001">
    <property type="entry name" value="DNA-directed RNA polymerase subunit beta"/>
    <property type="match status" value="1"/>
</dbReference>
<dbReference type="FunFam" id="3.90.1100.10:FF:000002">
    <property type="entry name" value="DNA-directed RNA polymerase subunit beta"/>
    <property type="match status" value="1"/>
</dbReference>
<dbReference type="FunFam" id="3.90.1110.10:FF:000001">
    <property type="entry name" value="DNA-directed RNA polymerase subunit beta"/>
    <property type="match status" value="1"/>
</dbReference>
<dbReference type="FunFam" id="3.90.1110.10:FF:000004">
    <property type="entry name" value="DNA-directed RNA polymerase subunit beta"/>
    <property type="match status" value="1"/>
</dbReference>
<dbReference type="FunFam" id="3.90.1800.10:FF:000001">
    <property type="entry name" value="DNA-directed RNA polymerase subunit beta"/>
    <property type="match status" value="1"/>
</dbReference>
<dbReference type="Gene3D" id="2.40.50.100">
    <property type="match status" value="1"/>
</dbReference>
<dbReference type="Gene3D" id="2.40.50.150">
    <property type="match status" value="1"/>
</dbReference>
<dbReference type="Gene3D" id="3.90.1100.10">
    <property type="match status" value="2"/>
</dbReference>
<dbReference type="Gene3D" id="6.10.140.1670">
    <property type="match status" value="1"/>
</dbReference>
<dbReference type="Gene3D" id="2.30.150.10">
    <property type="entry name" value="DNA-directed RNA polymerase, beta subunit, external 1 domain"/>
    <property type="match status" value="1"/>
</dbReference>
<dbReference type="Gene3D" id="2.40.270.10">
    <property type="entry name" value="DNA-directed RNA polymerase, subunit 2, domain 6"/>
    <property type="match status" value="1"/>
</dbReference>
<dbReference type="Gene3D" id="3.90.1800.10">
    <property type="entry name" value="RNA polymerase alpha subunit dimerisation domain"/>
    <property type="match status" value="1"/>
</dbReference>
<dbReference type="Gene3D" id="3.90.1110.10">
    <property type="entry name" value="RNA polymerase Rpb2, domain 2"/>
    <property type="match status" value="1"/>
</dbReference>
<dbReference type="HAMAP" id="MF_01321">
    <property type="entry name" value="RNApol_bact_RpoB"/>
    <property type="match status" value="1"/>
</dbReference>
<dbReference type="InterPro" id="IPR042107">
    <property type="entry name" value="DNA-dir_RNA_pol_bsu_ext_1_sf"/>
</dbReference>
<dbReference type="InterPro" id="IPR019462">
    <property type="entry name" value="DNA-dir_RNA_pol_bsu_external_1"/>
</dbReference>
<dbReference type="InterPro" id="IPR015712">
    <property type="entry name" value="DNA-dir_RNA_pol_su2"/>
</dbReference>
<dbReference type="InterPro" id="IPR007120">
    <property type="entry name" value="DNA-dir_RNAP_su2_dom"/>
</dbReference>
<dbReference type="InterPro" id="IPR037033">
    <property type="entry name" value="DNA-dir_RNAP_su2_hyb_sf"/>
</dbReference>
<dbReference type="InterPro" id="IPR010243">
    <property type="entry name" value="RNA_pol_bsu_bac"/>
</dbReference>
<dbReference type="InterPro" id="IPR007121">
    <property type="entry name" value="RNA_pol_bsu_CS"/>
</dbReference>
<dbReference type="InterPro" id="IPR007644">
    <property type="entry name" value="RNA_pol_bsu_protrusion"/>
</dbReference>
<dbReference type="InterPro" id="IPR007642">
    <property type="entry name" value="RNA_pol_Rpb2_2"/>
</dbReference>
<dbReference type="InterPro" id="IPR037034">
    <property type="entry name" value="RNA_pol_Rpb2_2_sf"/>
</dbReference>
<dbReference type="InterPro" id="IPR007645">
    <property type="entry name" value="RNA_pol_Rpb2_3"/>
</dbReference>
<dbReference type="InterPro" id="IPR007641">
    <property type="entry name" value="RNA_pol_Rpb2_7"/>
</dbReference>
<dbReference type="InterPro" id="IPR014724">
    <property type="entry name" value="RNA_pol_RPB2_OB-fold"/>
</dbReference>
<dbReference type="NCBIfam" id="NF001616">
    <property type="entry name" value="PRK00405.1"/>
    <property type="match status" value="1"/>
</dbReference>
<dbReference type="NCBIfam" id="TIGR02013">
    <property type="entry name" value="rpoB"/>
    <property type="match status" value="1"/>
</dbReference>
<dbReference type="PANTHER" id="PTHR20856">
    <property type="entry name" value="DNA-DIRECTED RNA POLYMERASE I SUBUNIT 2"/>
    <property type="match status" value="1"/>
</dbReference>
<dbReference type="Pfam" id="PF04563">
    <property type="entry name" value="RNA_pol_Rpb2_1"/>
    <property type="match status" value="1"/>
</dbReference>
<dbReference type="Pfam" id="PF04561">
    <property type="entry name" value="RNA_pol_Rpb2_2"/>
    <property type="match status" value="2"/>
</dbReference>
<dbReference type="Pfam" id="PF04565">
    <property type="entry name" value="RNA_pol_Rpb2_3"/>
    <property type="match status" value="1"/>
</dbReference>
<dbReference type="Pfam" id="PF10385">
    <property type="entry name" value="RNA_pol_Rpb2_45"/>
    <property type="match status" value="1"/>
</dbReference>
<dbReference type="Pfam" id="PF00562">
    <property type="entry name" value="RNA_pol_Rpb2_6"/>
    <property type="match status" value="1"/>
</dbReference>
<dbReference type="Pfam" id="PF04560">
    <property type="entry name" value="RNA_pol_Rpb2_7"/>
    <property type="match status" value="1"/>
</dbReference>
<dbReference type="SUPFAM" id="SSF64484">
    <property type="entry name" value="beta and beta-prime subunits of DNA dependent RNA-polymerase"/>
    <property type="match status" value="1"/>
</dbReference>
<dbReference type="PROSITE" id="PS01166">
    <property type="entry name" value="RNA_POL_BETA"/>
    <property type="match status" value="1"/>
</dbReference>
<reference key="1">
    <citation type="journal article" date="2009" name="PLoS Genet.">
        <title>Organised genome dynamics in the Escherichia coli species results in highly diverse adaptive paths.</title>
        <authorList>
            <person name="Touchon M."/>
            <person name="Hoede C."/>
            <person name="Tenaillon O."/>
            <person name="Barbe V."/>
            <person name="Baeriswyl S."/>
            <person name="Bidet P."/>
            <person name="Bingen E."/>
            <person name="Bonacorsi S."/>
            <person name="Bouchier C."/>
            <person name="Bouvet O."/>
            <person name="Calteau A."/>
            <person name="Chiapello H."/>
            <person name="Clermont O."/>
            <person name="Cruveiller S."/>
            <person name="Danchin A."/>
            <person name="Diard M."/>
            <person name="Dossat C."/>
            <person name="Karoui M.E."/>
            <person name="Frapy E."/>
            <person name="Garry L."/>
            <person name="Ghigo J.M."/>
            <person name="Gilles A.M."/>
            <person name="Johnson J."/>
            <person name="Le Bouguenec C."/>
            <person name="Lescat M."/>
            <person name="Mangenot S."/>
            <person name="Martinez-Jehanne V."/>
            <person name="Matic I."/>
            <person name="Nassif X."/>
            <person name="Oztas S."/>
            <person name="Petit M.A."/>
            <person name="Pichon C."/>
            <person name="Rouy Z."/>
            <person name="Ruf C.S."/>
            <person name="Schneider D."/>
            <person name="Tourret J."/>
            <person name="Vacherie B."/>
            <person name="Vallenet D."/>
            <person name="Medigue C."/>
            <person name="Rocha E.P.C."/>
            <person name="Denamur E."/>
        </authorList>
    </citation>
    <scope>NUCLEOTIDE SEQUENCE [LARGE SCALE GENOMIC DNA]</scope>
    <source>
        <strain>UMN026 / ExPEC</strain>
    </source>
</reference>
<gene>
    <name evidence="1" type="primary">rpoB</name>
    <name type="ordered locus">ECUMN_4509</name>
</gene>